<comment type="function">
    <text evidence="8 11 12">Non-receptor protein tyrosine phosphatase (PubMed:8463208). Required for maintaining dock/dreadlocks in its non-phosphorylated state (PubMed:12014990). Negative regulator of InR/insulin-like receptor signaling through dephosphorylation of tyrosines when recruited by dock/dreadlocks (PubMed:21707536).</text>
</comment>
<comment type="catalytic activity">
    <reaction evidence="5 8 12">
        <text>O-phospho-L-tyrosyl-[protein] + H2O = L-tyrosyl-[protein] + phosphate</text>
        <dbReference type="Rhea" id="RHEA:10684"/>
        <dbReference type="Rhea" id="RHEA-COMP:10136"/>
        <dbReference type="Rhea" id="RHEA-COMP:20101"/>
        <dbReference type="ChEBI" id="CHEBI:15377"/>
        <dbReference type="ChEBI" id="CHEBI:43474"/>
        <dbReference type="ChEBI" id="CHEBI:46858"/>
        <dbReference type="ChEBI" id="CHEBI:61978"/>
        <dbReference type="EC" id="3.1.3.48"/>
    </reaction>
</comment>
<comment type="subunit">
    <text evidence="11 13">Interacts (via C-terminus) with dock/dreadlocks; this interaction is independent of insulin stimulation and is required for dephosphorylation of the insulin-like receptor InR.</text>
</comment>
<comment type="interaction">
    <interactant intactId="EBI-74714">
        <id>Q9W0G1</id>
    </interactant>
    <interactant intactId="EBI-74727">
        <id>Q8IPW2</id>
        <label>dock</label>
    </interactant>
    <organismsDiffer>false</organismsDiffer>
    <experiments>8</experiments>
</comment>
<comment type="subcellular location">
    <molecule>Isoform A</molecule>
    <subcellularLocation>
        <location>Cytoplasm</location>
    </subcellularLocation>
    <subcellularLocation>
        <location evidence="3">Membrane</location>
        <topology evidence="3">Single-pass membrane protein</topology>
    </subcellularLocation>
    <subcellularLocation>
        <location>Endomembrane system</location>
    </subcellularLocation>
    <text>Associates with the membranes of the reticular network and the mitochondria.</text>
</comment>
<comment type="subcellular location">
    <molecule>Isoform B</molecule>
    <subcellularLocation>
        <location>Nucleus</location>
    </subcellularLocation>
</comment>
<comment type="alternative products">
    <event type="alternative splicing"/>
    <isoform>
        <id>Q9W0G1-1</id>
        <name evidence="12">A</name>
        <name evidence="12">Cytoplasmic</name>
        <name evidence="18">Membrane</name>
        <name>DPTP61Fm</name>
        <sequence type="displayed"/>
    </isoform>
    <isoform>
        <id>Q9W0G1-2</id>
        <name evidence="12">B</name>
        <name evidence="12 18">Nuclear</name>
        <name>DPTP61Fn</name>
        <sequence type="described" ref="VSP_050259"/>
    </isoform>
    <isoform>
        <id>Q9W0G1-3</id>
        <name evidence="15">C</name>
        <sequence type="described" ref="VSP_050733 VSP_050259"/>
    </isoform>
</comment>
<comment type="developmental stage">
    <text evidence="13 14">Detected in embryonic protein extracts (at protein level) (PubMed:8663600). Expressed during oogenesis and embryogenesis (PubMed:9256342). Expressed at low levels in the central nervous system of stage 14 embryos (PubMed:8663600). High levels of expression in 0-12 hour old embryos, pupae and adults with very low levels late in embryogenesis and in larvae (PubMed:8663600).</text>
</comment>
<comment type="developmental stage">
    <molecule>Isoform A</molecule>
    <text evidence="14">Accumulates in 16 segmentally repeated stripes in the ectoderm during germband extension (PubMed:9256342). These stripes are flanked by, and adjacent to, the domains of engrailed and wingless gene expression in the anterior/posterior axis (PubMed:9256342). In stage 10 embryos, isoform A colocalizes with the area lateral to the denticle belts that will give rise to naked cuticle (PubMed:9256342). Also expressed later in the central nervous system of embryos (PubMed:9256342).</text>
</comment>
<comment type="developmental stage">
    <molecule>Isoform B</molecule>
    <text evidence="14">Expressed in the mesoderm and neuroblast layer during germband extension and later in the gut epithelia.</text>
</comment>
<comment type="domain">
    <text evidence="13">Contains 5 Potential PXXP motifs that may mediate interaction with the SH3 domains of dock/dreadlocks.</text>
</comment>
<comment type="similarity">
    <text evidence="19">Belongs to the protein-tyrosine phosphatase family. Non-receptor class 1 subfamily.</text>
</comment>
<accession>Q9W0G1</accession>
<accession>Q27932</accession>
<accession>Q8SZY3</accession>
<accession>Q9W0G2</accession>
<organism>
    <name type="scientific">Drosophila melanogaster</name>
    <name type="common">Fruit fly</name>
    <dbReference type="NCBI Taxonomy" id="7227"/>
    <lineage>
        <taxon>Eukaryota</taxon>
        <taxon>Metazoa</taxon>
        <taxon>Ecdysozoa</taxon>
        <taxon>Arthropoda</taxon>
        <taxon>Hexapoda</taxon>
        <taxon>Insecta</taxon>
        <taxon>Pterygota</taxon>
        <taxon>Neoptera</taxon>
        <taxon>Endopterygota</taxon>
        <taxon>Diptera</taxon>
        <taxon>Brachycera</taxon>
        <taxon>Muscomorpha</taxon>
        <taxon>Ephydroidea</taxon>
        <taxon>Drosophilidae</taxon>
        <taxon>Drosophila</taxon>
        <taxon>Sophophora</taxon>
    </lineage>
</organism>
<gene>
    <name evidence="20" type="primary">Ptp61F</name>
    <name evidence="20" type="synonym">PTP1B</name>
    <name evidence="20" type="ORF">CG9181</name>
</gene>
<protein>
    <recommendedName>
        <fullName>Tyrosine-protein phosphatase non-receptor type 61F</fullName>
        <ecNumber evidence="4 8 12">3.1.3.48</ecNumber>
    </recommendedName>
    <alternativeName>
        <fullName>dPTP61F</fullName>
    </alternativeName>
</protein>
<reference evidence="19" key="1">
    <citation type="journal article" date="1993" name="J. Biol. Chem.">
        <title>Alternative splicing gives rise to a nuclear protein tyrosine phosphatase in Drosophila.</title>
        <authorList>
            <person name="McLaughlin S."/>
            <person name="Dixon J.E."/>
        </authorList>
    </citation>
    <scope>NUCLEOTIDE SEQUENCE [GENOMIC DNA / MRNA] (ISOFORMS A AND B)</scope>
    <scope>FUNCTION</scope>
    <scope>CATALYTIC ACTIVITY</scope>
    <scope>SUBCELLULAR LOCATION</scope>
    <source>
        <strain evidence="12">Canton-S</strain>
        <tissue evidence="12">Head</tissue>
    </source>
</reference>
<reference evidence="19" key="2">
    <citation type="submission" date="1993-04" db="EMBL/GenBank/DDBJ databases">
        <title>Identification of a Drosophila protein tyrosine phosphatase expressed in a pattern of segmental stripes in the germ band extended embryo.</title>
        <authorList>
            <person name="Kung T.Y."/>
            <person name="Tian S.S."/>
            <person name="Zinn K."/>
        </authorList>
    </citation>
    <scope>NUCLEOTIDE SEQUENCE [MRNA] (ISOFORM A)</scope>
</reference>
<reference evidence="19" key="3">
    <citation type="journal article" date="2000" name="Science">
        <title>The genome sequence of Drosophila melanogaster.</title>
        <authorList>
            <person name="Adams M.D."/>
            <person name="Celniker S.E."/>
            <person name="Holt R.A."/>
            <person name="Evans C.A."/>
            <person name="Gocayne J.D."/>
            <person name="Amanatides P.G."/>
            <person name="Scherer S.E."/>
            <person name="Li P.W."/>
            <person name="Hoskins R.A."/>
            <person name="Galle R.F."/>
            <person name="George R.A."/>
            <person name="Lewis S.E."/>
            <person name="Richards S."/>
            <person name="Ashburner M."/>
            <person name="Henderson S.N."/>
            <person name="Sutton G.G."/>
            <person name="Wortman J.R."/>
            <person name="Yandell M.D."/>
            <person name="Zhang Q."/>
            <person name="Chen L.X."/>
            <person name="Brandon R.C."/>
            <person name="Rogers Y.-H.C."/>
            <person name="Blazej R.G."/>
            <person name="Champe M."/>
            <person name="Pfeiffer B.D."/>
            <person name="Wan K.H."/>
            <person name="Doyle C."/>
            <person name="Baxter E.G."/>
            <person name="Helt G."/>
            <person name="Nelson C.R."/>
            <person name="Miklos G.L.G."/>
            <person name="Abril J.F."/>
            <person name="Agbayani A."/>
            <person name="An H.-J."/>
            <person name="Andrews-Pfannkoch C."/>
            <person name="Baldwin D."/>
            <person name="Ballew R.M."/>
            <person name="Basu A."/>
            <person name="Baxendale J."/>
            <person name="Bayraktaroglu L."/>
            <person name="Beasley E.M."/>
            <person name="Beeson K.Y."/>
            <person name="Benos P.V."/>
            <person name="Berman B.P."/>
            <person name="Bhandari D."/>
            <person name="Bolshakov S."/>
            <person name="Borkova D."/>
            <person name="Botchan M.R."/>
            <person name="Bouck J."/>
            <person name="Brokstein P."/>
            <person name="Brottier P."/>
            <person name="Burtis K.C."/>
            <person name="Busam D.A."/>
            <person name="Butler H."/>
            <person name="Cadieu E."/>
            <person name="Center A."/>
            <person name="Chandra I."/>
            <person name="Cherry J.M."/>
            <person name="Cawley S."/>
            <person name="Dahlke C."/>
            <person name="Davenport L.B."/>
            <person name="Davies P."/>
            <person name="de Pablos B."/>
            <person name="Delcher A."/>
            <person name="Deng Z."/>
            <person name="Mays A.D."/>
            <person name="Dew I."/>
            <person name="Dietz S.M."/>
            <person name="Dodson K."/>
            <person name="Doup L.E."/>
            <person name="Downes M."/>
            <person name="Dugan-Rocha S."/>
            <person name="Dunkov B.C."/>
            <person name="Dunn P."/>
            <person name="Durbin K.J."/>
            <person name="Evangelista C.C."/>
            <person name="Ferraz C."/>
            <person name="Ferriera S."/>
            <person name="Fleischmann W."/>
            <person name="Fosler C."/>
            <person name="Gabrielian A.E."/>
            <person name="Garg N.S."/>
            <person name="Gelbart W.M."/>
            <person name="Glasser K."/>
            <person name="Glodek A."/>
            <person name="Gong F."/>
            <person name="Gorrell J.H."/>
            <person name="Gu Z."/>
            <person name="Guan P."/>
            <person name="Harris M."/>
            <person name="Harris N.L."/>
            <person name="Harvey D.A."/>
            <person name="Heiman T.J."/>
            <person name="Hernandez J.R."/>
            <person name="Houck J."/>
            <person name="Hostin D."/>
            <person name="Houston K.A."/>
            <person name="Howland T.J."/>
            <person name="Wei M.-H."/>
            <person name="Ibegwam C."/>
            <person name="Jalali M."/>
            <person name="Kalush F."/>
            <person name="Karpen G.H."/>
            <person name="Ke Z."/>
            <person name="Kennison J.A."/>
            <person name="Ketchum K.A."/>
            <person name="Kimmel B.E."/>
            <person name="Kodira C.D."/>
            <person name="Kraft C.L."/>
            <person name="Kravitz S."/>
            <person name="Kulp D."/>
            <person name="Lai Z."/>
            <person name="Lasko P."/>
            <person name="Lei Y."/>
            <person name="Levitsky A.A."/>
            <person name="Li J.H."/>
            <person name="Li Z."/>
            <person name="Liang Y."/>
            <person name="Lin X."/>
            <person name="Liu X."/>
            <person name="Mattei B."/>
            <person name="McIntosh T.C."/>
            <person name="McLeod M.P."/>
            <person name="McPherson D."/>
            <person name="Merkulov G."/>
            <person name="Milshina N.V."/>
            <person name="Mobarry C."/>
            <person name="Morris J."/>
            <person name="Moshrefi A."/>
            <person name="Mount S.M."/>
            <person name="Moy M."/>
            <person name="Murphy B."/>
            <person name="Murphy L."/>
            <person name="Muzny D.M."/>
            <person name="Nelson D.L."/>
            <person name="Nelson D.R."/>
            <person name="Nelson K.A."/>
            <person name="Nixon K."/>
            <person name="Nusskern D.R."/>
            <person name="Pacleb J.M."/>
            <person name="Palazzolo M."/>
            <person name="Pittman G.S."/>
            <person name="Pan S."/>
            <person name="Pollard J."/>
            <person name="Puri V."/>
            <person name="Reese M.G."/>
            <person name="Reinert K."/>
            <person name="Remington K."/>
            <person name="Saunders R.D.C."/>
            <person name="Scheeler F."/>
            <person name="Shen H."/>
            <person name="Shue B.C."/>
            <person name="Siden-Kiamos I."/>
            <person name="Simpson M."/>
            <person name="Skupski M.P."/>
            <person name="Smith T.J."/>
            <person name="Spier E."/>
            <person name="Spradling A.C."/>
            <person name="Stapleton M."/>
            <person name="Strong R."/>
            <person name="Sun E."/>
            <person name="Svirskas R."/>
            <person name="Tector C."/>
            <person name="Turner R."/>
            <person name="Venter E."/>
            <person name="Wang A.H."/>
            <person name="Wang X."/>
            <person name="Wang Z.-Y."/>
            <person name="Wassarman D.A."/>
            <person name="Weinstock G.M."/>
            <person name="Weissenbach J."/>
            <person name="Williams S.M."/>
            <person name="Woodage T."/>
            <person name="Worley K.C."/>
            <person name="Wu D."/>
            <person name="Yang S."/>
            <person name="Yao Q.A."/>
            <person name="Ye J."/>
            <person name="Yeh R.-F."/>
            <person name="Zaveri J.S."/>
            <person name="Zhan M."/>
            <person name="Zhang G."/>
            <person name="Zhao Q."/>
            <person name="Zheng L."/>
            <person name="Zheng X.H."/>
            <person name="Zhong F.N."/>
            <person name="Zhong W."/>
            <person name="Zhou X."/>
            <person name="Zhu S.C."/>
            <person name="Zhu X."/>
            <person name="Smith H.O."/>
            <person name="Gibbs R.A."/>
            <person name="Myers E.W."/>
            <person name="Rubin G.M."/>
            <person name="Venter J.C."/>
        </authorList>
    </citation>
    <scope>NUCLEOTIDE SEQUENCE [LARGE SCALE GENOMIC DNA]</scope>
    <source>
        <strain evidence="7">Berkeley</strain>
    </source>
</reference>
<reference evidence="19" key="4">
    <citation type="journal article" date="2002" name="Genome Biol.">
        <title>Annotation of the Drosophila melanogaster euchromatic genome: a systematic review.</title>
        <authorList>
            <person name="Misra S."/>
            <person name="Crosby M.A."/>
            <person name="Mungall C.J."/>
            <person name="Matthews B.B."/>
            <person name="Campbell K.S."/>
            <person name="Hradecky P."/>
            <person name="Huang Y."/>
            <person name="Kaminker J.S."/>
            <person name="Millburn G.H."/>
            <person name="Prochnik S.E."/>
            <person name="Smith C.D."/>
            <person name="Tupy J.L."/>
            <person name="Whitfield E.J."/>
            <person name="Bayraktaroglu L."/>
            <person name="Berman B.P."/>
            <person name="Bettencourt B.R."/>
            <person name="Celniker S.E."/>
            <person name="de Grey A.D.N.J."/>
            <person name="Drysdale R.A."/>
            <person name="Harris N.L."/>
            <person name="Richter J."/>
            <person name="Russo S."/>
            <person name="Schroeder A.J."/>
            <person name="Shu S.Q."/>
            <person name="Stapleton M."/>
            <person name="Yamada C."/>
            <person name="Ashburner M."/>
            <person name="Gelbart W.M."/>
            <person name="Rubin G.M."/>
            <person name="Lewis S.E."/>
        </authorList>
    </citation>
    <scope>GENOME REANNOTATION</scope>
    <scope>ALTERNATIVE SPLICING</scope>
    <source>
        <strain>Berkeley</strain>
    </source>
</reference>
<reference evidence="19" key="5">
    <citation type="journal article" date="2002" name="Genome Biol.">
        <title>A Drosophila full-length cDNA resource.</title>
        <authorList>
            <person name="Stapleton M."/>
            <person name="Carlson J.W."/>
            <person name="Brokstein P."/>
            <person name="Yu C."/>
            <person name="Champe M."/>
            <person name="George R.A."/>
            <person name="Guarin H."/>
            <person name="Kronmiller B."/>
            <person name="Pacleb J.M."/>
            <person name="Park S."/>
            <person name="Wan K.H."/>
            <person name="Rubin G.M."/>
            <person name="Celniker S.E."/>
        </authorList>
    </citation>
    <scope>NUCLEOTIDE SEQUENCE [LARGE SCALE MRNA] (ISOFORM C)</scope>
    <source>
        <strain evidence="9">Berkeley</strain>
        <tissue evidence="9">Larva</tissue>
        <tissue evidence="9">Pupae</tissue>
    </source>
</reference>
<reference key="6">
    <citation type="journal article" date="1996" name="J. Biol. Chem.">
        <title>A Drosophila protein-tyrosine phosphatase associates with an adapter protein required for axonal guidance.</title>
        <authorList>
            <person name="Clemens J.C."/>
            <person name="Ursuliak Z."/>
            <person name="Clemens K.K."/>
            <person name="Price J.V."/>
            <person name="Dixon J.E."/>
        </authorList>
    </citation>
    <scope>INTERACTION WITH DOCK</scope>
    <scope>DEVELOPMENTAL STAGE</scope>
    <scope>DOMAIN</scope>
</reference>
<reference key="7">
    <citation type="journal article" date="1997" name="Mech. Dev.">
        <title>Differential accumulation of DPTP61F alternative transcripts: regulation of a protein tyrosine phosphatase by segmentation genes.</title>
        <authorList>
            <person name="Ursuliak Z."/>
            <person name="Clemens J.C."/>
            <person name="Dixon J.E."/>
            <person name="Price J.V."/>
        </authorList>
    </citation>
    <scope>DEVELOPMENTAL STAGE</scope>
</reference>
<reference key="8">
    <citation type="journal article" date="2002" name="Biochem. J.">
        <title>Use of double-stranded RNA-mediated interference to determine the substrates of protein tyrosine kinases and phosphatases.</title>
        <authorList>
            <person name="Muda M."/>
            <person name="Worby C.A."/>
            <person name="Simonson-Leff N."/>
            <person name="Clemens J.C."/>
            <person name="Dixon J.E."/>
        </authorList>
    </citation>
    <scope>FUNCTION</scope>
    <scope>CATALYTIC ACTIVITY</scope>
</reference>
<reference key="9">
    <citation type="journal article" date="2008" name="J. Proteome Res.">
        <title>Phosphoproteome analysis of Drosophila melanogaster embryos.</title>
        <authorList>
            <person name="Zhai B."/>
            <person name="Villen J."/>
            <person name="Beausoleil S.A."/>
            <person name="Mintseris J."/>
            <person name="Gygi S.P."/>
        </authorList>
    </citation>
    <scope>PHOSPHORYLATION [LARGE SCALE ANALYSIS] AT SER-83 AND TYR-86</scope>
    <scope>IDENTIFICATION BY MASS SPECTROMETRY</scope>
    <source>
        <tissue>Embryo</tissue>
    </source>
</reference>
<reference key="10">
    <citation type="journal article" date="2011" name="Biochem. J.">
        <title>Dock/Nck facilitates PTP61F/PTP1B regulation of insulin signalling.</title>
        <authorList>
            <person name="Wu C.L."/>
            <person name="Buszard B."/>
            <person name="Teng C.H."/>
            <person name="Chen W.L."/>
            <person name="Warr C.G."/>
            <person name="Tiganis T."/>
            <person name="Meng T.C."/>
        </authorList>
    </citation>
    <scope>FUNCTION</scope>
    <scope>INTERACTION WITH DOCK</scope>
    <scope>MUTAGENESIS OF CYS-237</scope>
</reference>
<proteinExistence type="evidence at protein level"/>
<name>PTP61_DROME</name>
<keyword id="KW-0025">Alternative splicing</keyword>
<keyword id="KW-0963">Cytoplasm</keyword>
<keyword id="KW-0378">Hydrolase</keyword>
<keyword id="KW-0472">Membrane</keyword>
<keyword id="KW-0539">Nucleus</keyword>
<keyword id="KW-0597">Phosphoprotein</keyword>
<keyword id="KW-0904">Protein phosphatase</keyword>
<keyword id="KW-1185">Reference proteome</keyword>
<keyword id="KW-0812">Transmembrane</keyword>
<keyword id="KW-1133">Transmembrane helix</keyword>
<feature type="chain" id="PRO_0000094853" description="Tyrosine-protein phosphatase non-receptor type 61F">
    <location>
        <begin position="1"/>
        <end position="548"/>
    </location>
</feature>
<feature type="topological domain" description="Cytoplasmic" evidence="19">
    <location>
        <begin position="1"/>
        <end position="525"/>
    </location>
</feature>
<feature type="transmembrane region" description="Helical" evidence="3">
    <location>
        <begin position="526"/>
        <end position="545"/>
    </location>
</feature>
<feature type="topological domain" description="Extracellular" evidence="19">
    <location>
        <begin position="546"/>
        <end position="548"/>
    </location>
</feature>
<feature type="domain" description="Tyrosine-protein phosphatase" evidence="4">
    <location>
        <begin position="33"/>
        <end position="296"/>
    </location>
</feature>
<feature type="region of interest" description="Disordered" evidence="6">
    <location>
        <begin position="46"/>
        <end position="65"/>
    </location>
</feature>
<feature type="region of interest" description="Disordered" evidence="6">
    <location>
        <begin position="386"/>
        <end position="517"/>
    </location>
</feature>
<feature type="short sequence motif" description="PXXP motif (SH3-binding) 1" evidence="13">
    <location>
        <begin position="327"/>
        <end position="330"/>
    </location>
</feature>
<feature type="short sequence motif" description="PXXP motif (SH3-binding) 2" evidence="13">
    <location>
        <begin position="339"/>
        <end position="342"/>
    </location>
</feature>
<feature type="short sequence motif" description="PXXP motif (SH3-binding) 3" evidence="13">
    <location>
        <begin position="394"/>
        <end position="397"/>
    </location>
</feature>
<feature type="short sequence motif" description="PXXP motif (SH3-binding) 4" evidence="13">
    <location>
        <begin position="459"/>
        <end position="462"/>
    </location>
</feature>
<feature type="short sequence motif" description="PXXP motif (SH3-binding) 5" evidence="13">
    <location>
        <begin position="480"/>
        <end position="483"/>
    </location>
</feature>
<feature type="compositionally biased region" description="Acidic residues" evidence="6">
    <location>
        <begin position="404"/>
        <end position="428"/>
    </location>
</feature>
<feature type="compositionally biased region" description="Basic and acidic residues" evidence="6">
    <location>
        <begin position="502"/>
        <end position="517"/>
    </location>
</feature>
<feature type="active site" description="Phosphocysteine intermediate" evidence="2 4 5">
    <location>
        <position position="237"/>
    </location>
</feature>
<feature type="binding site" evidence="1">
    <location>
        <position position="203"/>
    </location>
    <ligand>
        <name>substrate</name>
    </ligand>
</feature>
<feature type="binding site" evidence="1">
    <location>
        <begin position="237"/>
        <end position="243"/>
    </location>
    <ligand>
        <name>substrate</name>
    </ligand>
</feature>
<feature type="binding site" evidence="1">
    <location>
        <position position="281"/>
    </location>
    <ligand>
        <name>substrate</name>
    </ligand>
</feature>
<feature type="modified residue" description="Phosphoserine" evidence="10">
    <location>
        <position position="83"/>
    </location>
</feature>
<feature type="modified residue" description="Phosphotyrosine" evidence="10">
    <location>
        <position position="86"/>
    </location>
</feature>
<feature type="splice variant" id="VSP_050733" description="In isoform C." evidence="15 16">
    <original>MSEQKTSGSGSAAAARLQIEAEYKDKGPQWHRFY</original>
    <variation>MTKFAQRSKKTCEIRGTMDVCVCVCVSMW</variation>
    <location>
        <begin position="1"/>
        <end position="34"/>
    </location>
</feature>
<feature type="splice variant" id="VSP_050259" description="In isoform B and isoform C." evidence="16 17">
    <original>SLLTYIAAGVVVGVICAYAYTKLG</original>
    <variation>RGNRLKKSKTK</variation>
    <location>
        <begin position="525"/>
        <end position="548"/>
    </location>
</feature>
<feature type="mutagenesis site" description="Abolishes phosphatase activity." evidence="11">
    <original>C</original>
    <variation>S</variation>
    <location>
        <position position="237"/>
    </location>
</feature>
<feature type="sequence conflict" description="In Ref. 1 and 2." evidence="19" ref="1 2">
    <original>S</original>
    <variation>T</variation>
    <location>
        <position position="274"/>
    </location>
</feature>
<feature type="sequence conflict" description="In Ref. 1; AAA75348/AAA75349/AAA75338/AAA75339." evidence="19" ref="1">
    <original>I</original>
    <variation>F</variation>
    <location>
        <position position="382"/>
    </location>
</feature>
<sequence>MSEQKTSGSGSAAAARLQIEAEYKDKGPQWHRFYKEICETCDREAKEKQFSTSESERHTNRGLNRYRDVNPYDHSRIVLKRGSVDYINANLVQLERAERQYILTQGPLVDTVGHFWLMVWEQKSRAVLMLNKLMEKKQIKCHLYWPNEMGADKALKLPHVKLTVELVRLETYQNFVRRWFKLTDLETQQSREVMQFHYTTWPDFGIPSSPNAFLKFLQQVRDSGCLSRDVGPAVVHCSAGIGRSGTFCLVDCCLVLIDKYGECNVSKVLCELRSYRMGLIQTADQLDFSYQAIIEGIKKLHDPTFLDAEEPLISNDTETHTLDELPPPLPPRVQSLNLPLAPNSGGILSLNMRAAQANGAESIGKELSKDALNNFINQHDMIHDAEVADSRPLPPLPVRAFNDSDSDEDYLLDDDDEDDTDEDEEYETINEHDADPVNGHVPATTQPHADDVNANNEKPAVPVDEQHKANGIDPIPGQLPASPENELKRRKRNEYQASLEQKVNDMKRKQRENEDKQLAAKKRRSLLTYIAAGVVVGVICAYAYTKLG</sequence>
<evidence type="ECO:0000250" key="1"/>
<evidence type="ECO:0000250" key="2">
    <source>
        <dbReference type="UniProtKB" id="P18031"/>
    </source>
</evidence>
<evidence type="ECO:0000255" key="3"/>
<evidence type="ECO:0000255" key="4">
    <source>
        <dbReference type="PROSITE-ProRule" id="PRU00160"/>
    </source>
</evidence>
<evidence type="ECO:0000255" key="5">
    <source>
        <dbReference type="PROSITE-ProRule" id="PRU10044"/>
    </source>
</evidence>
<evidence type="ECO:0000256" key="6">
    <source>
        <dbReference type="SAM" id="MobiDB-lite"/>
    </source>
</evidence>
<evidence type="ECO:0000269" key="7">
    <source>
    </source>
</evidence>
<evidence type="ECO:0000269" key="8">
    <source>
    </source>
</evidence>
<evidence type="ECO:0000269" key="9">
    <source>
    </source>
</evidence>
<evidence type="ECO:0000269" key="10">
    <source>
    </source>
</evidence>
<evidence type="ECO:0000269" key="11">
    <source>
    </source>
</evidence>
<evidence type="ECO:0000269" key="12">
    <source>
    </source>
</evidence>
<evidence type="ECO:0000269" key="13">
    <source>
    </source>
</evidence>
<evidence type="ECO:0000269" key="14">
    <source>
    </source>
</evidence>
<evidence type="ECO:0000303" key="15">
    <source>
    </source>
</evidence>
<evidence type="ECO:0000303" key="16">
    <source>
    </source>
</evidence>
<evidence type="ECO:0000303" key="17">
    <source>
    </source>
</evidence>
<evidence type="ECO:0000303" key="18">
    <source>
    </source>
</evidence>
<evidence type="ECO:0000305" key="19"/>
<evidence type="ECO:0000312" key="20">
    <source>
        <dbReference type="FlyBase" id="FBgn0267487"/>
    </source>
</evidence>
<dbReference type="EC" id="3.1.3.48" evidence="4 8 12"/>
<dbReference type="EMBL" id="L11250">
    <property type="protein sequence ID" value="AAA75348.1"/>
    <property type="molecule type" value="Genomic_DNA"/>
</dbReference>
<dbReference type="EMBL" id="L11249">
    <property type="protein sequence ID" value="AAA75348.1"/>
    <property type="status" value="JOINED"/>
    <property type="molecule type" value="Genomic_DNA"/>
</dbReference>
<dbReference type="EMBL" id="L11251">
    <property type="protein sequence ID" value="AAA75349.1"/>
    <property type="molecule type" value="Genomic_DNA"/>
</dbReference>
<dbReference type="EMBL" id="L11249">
    <property type="protein sequence ID" value="AAA75349.1"/>
    <property type="status" value="JOINED"/>
    <property type="molecule type" value="Genomic_DNA"/>
</dbReference>
<dbReference type="EMBL" id="L11250">
    <property type="protein sequence ID" value="AAA75349.1"/>
    <property type="status" value="JOINED"/>
    <property type="molecule type" value="Genomic_DNA"/>
</dbReference>
<dbReference type="EMBL" id="L11252">
    <property type="protein sequence ID" value="AAA75338.1"/>
    <property type="molecule type" value="mRNA"/>
</dbReference>
<dbReference type="EMBL" id="L11253">
    <property type="protein sequence ID" value="AAA75339.1"/>
    <property type="molecule type" value="mRNA"/>
</dbReference>
<dbReference type="EMBL" id="L14849">
    <property type="protein sequence ID" value="AAA28748.1"/>
    <property type="molecule type" value="mRNA"/>
</dbReference>
<dbReference type="EMBL" id="AE014296">
    <property type="protein sequence ID" value="AAF47486.1"/>
    <property type="molecule type" value="Genomic_DNA"/>
</dbReference>
<dbReference type="EMBL" id="AE014296">
    <property type="protein sequence ID" value="AAF47487.1"/>
    <property type="molecule type" value="Genomic_DNA"/>
</dbReference>
<dbReference type="EMBL" id="AE014296">
    <property type="protein sequence ID" value="AAN11475.1"/>
    <property type="molecule type" value="Genomic_DNA"/>
</dbReference>
<dbReference type="EMBL" id="AY069713">
    <property type="protein sequence ID" value="AAL39858.1"/>
    <property type="molecule type" value="mRNA"/>
</dbReference>
<dbReference type="PIR" id="A46101">
    <property type="entry name" value="A46101"/>
</dbReference>
<dbReference type="PIR" id="B46101">
    <property type="entry name" value="B46101"/>
</dbReference>
<dbReference type="RefSeq" id="NP_476687.1">
    <molecule id="Q9W0G1-1"/>
    <property type="nucleotide sequence ID" value="NM_057339.5"/>
</dbReference>
<dbReference type="RefSeq" id="NP_476688.1">
    <molecule id="Q9W0G1-2"/>
    <property type="nucleotide sequence ID" value="NM_057340.4"/>
</dbReference>
<dbReference type="RefSeq" id="NP_728600.1">
    <molecule id="Q9W0G1-3"/>
    <property type="nucleotide sequence ID" value="NM_167874.2"/>
</dbReference>
<dbReference type="SMR" id="Q9W0G1"/>
<dbReference type="BioGRID" id="63702">
    <property type="interactions" value="26"/>
</dbReference>
<dbReference type="FunCoup" id="Q9W0G1">
    <property type="interactions" value="1911"/>
</dbReference>
<dbReference type="IntAct" id="Q9W0G1">
    <property type="interactions" value="13"/>
</dbReference>
<dbReference type="STRING" id="7227.FBpp0072602"/>
<dbReference type="iPTMnet" id="Q9W0G1"/>
<dbReference type="PaxDb" id="7227-FBpp0072602"/>
<dbReference type="DNASU" id="38160"/>
<dbReference type="EnsemblMetazoa" id="FBtr0072716">
    <molecule id="Q9W0G1-3"/>
    <property type="protein sequence ID" value="FBpp0072600"/>
    <property type="gene ID" value="FBgn0267487"/>
</dbReference>
<dbReference type="EnsemblMetazoa" id="FBtr0072717">
    <molecule id="Q9W0G1-2"/>
    <property type="protein sequence ID" value="FBpp0072601"/>
    <property type="gene ID" value="FBgn0267487"/>
</dbReference>
<dbReference type="EnsemblMetazoa" id="FBtr0072718">
    <molecule id="Q9W0G1-1"/>
    <property type="protein sequence ID" value="FBpp0072602"/>
    <property type="gene ID" value="FBgn0267487"/>
</dbReference>
<dbReference type="GeneID" id="38160"/>
<dbReference type="KEGG" id="dme:Dmel_CG9181"/>
<dbReference type="AGR" id="FB:FBgn0267487"/>
<dbReference type="CTD" id="38160"/>
<dbReference type="FlyBase" id="FBgn0267487">
    <property type="gene designation" value="Ptp61F"/>
</dbReference>
<dbReference type="VEuPathDB" id="VectorBase:FBgn0267487"/>
<dbReference type="eggNOG" id="KOG0789">
    <property type="taxonomic scope" value="Eukaryota"/>
</dbReference>
<dbReference type="GeneTree" id="ENSGT00940000154686"/>
<dbReference type="InParanoid" id="Q9W0G1"/>
<dbReference type="OMA" id="PVRAFNE"/>
<dbReference type="OrthoDB" id="9450131at2759"/>
<dbReference type="PhylomeDB" id="Q9W0G1"/>
<dbReference type="Reactome" id="R-DME-210688">
    <molecule id="Q9W0G1-1"/>
    <property type="pathway name" value="Dephosphorylation by PTP61F phosphatases"/>
</dbReference>
<dbReference type="Reactome" id="R-DME-210693">
    <molecule id="Q9W0G1-2"/>
    <property type="pathway name" value="STAT92E dimer dephosphorylated in the nucleus and transported to the cytosol"/>
</dbReference>
<dbReference type="Reactome" id="R-DME-354192">
    <molecule id="Q9W0G1-2"/>
    <property type="pathway name" value="Integrin signaling"/>
</dbReference>
<dbReference type="Reactome" id="R-DME-77387">
    <molecule id="Q9W0G1-2"/>
    <property type="pathway name" value="Insulin receptor recycling"/>
</dbReference>
<dbReference type="Reactome" id="R-DME-877312">
    <molecule id="Q9W0G1-2"/>
    <property type="pathway name" value="Regulation of IFNG signaling"/>
</dbReference>
<dbReference type="Reactome" id="R-DME-9833482">
    <molecule id="Q9W0G1-2"/>
    <property type="pathway name" value="PKR-mediated signaling"/>
</dbReference>
<dbReference type="Reactome" id="R-DME-9860927">
    <molecule id="Q9W0G1-2"/>
    <property type="pathway name" value="Turbulent (oscillatory, disturbed) flow shear stress activates signaling by PIEZO1 and integrins in endothelial cells"/>
</dbReference>
<dbReference type="SignaLink" id="Q9W0G1"/>
<dbReference type="BioGRID-ORCS" id="38160">
    <property type="hits" value="0 hits in 3 CRISPR screens"/>
</dbReference>
<dbReference type="ChiTaRS" id="Ptp61F">
    <property type="organism name" value="fly"/>
</dbReference>
<dbReference type="GenomeRNAi" id="38160"/>
<dbReference type="PRO" id="PR:Q9W0G1"/>
<dbReference type="Proteomes" id="UP000000803">
    <property type="component" value="Chromosome 3L"/>
</dbReference>
<dbReference type="Bgee" id="FBgn0267487">
    <property type="expression patterns" value="Expressed in spermatogonium in testis and 193 other cell types or tissues"/>
</dbReference>
<dbReference type="ExpressionAtlas" id="Q9W0G1">
    <property type="expression patterns" value="baseline and differential"/>
</dbReference>
<dbReference type="GO" id="GO:0005737">
    <property type="term" value="C:cytoplasm"/>
    <property type="evidence" value="ECO:0000314"/>
    <property type="project" value="FlyBase"/>
</dbReference>
<dbReference type="GO" id="GO:0005829">
    <property type="term" value="C:cytosol"/>
    <property type="evidence" value="ECO:0000304"/>
    <property type="project" value="Reactome"/>
</dbReference>
<dbReference type="GO" id="GO:0012505">
    <property type="term" value="C:endomembrane system"/>
    <property type="evidence" value="ECO:0007669"/>
    <property type="project" value="UniProtKB-SubCell"/>
</dbReference>
<dbReference type="GO" id="GO:0016020">
    <property type="term" value="C:membrane"/>
    <property type="evidence" value="ECO:0007669"/>
    <property type="project" value="UniProtKB-SubCell"/>
</dbReference>
<dbReference type="GO" id="GO:0005740">
    <property type="term" value="C:mitochondrial envelope"/>
    <property type="evidence" value="ECO:0000314"/>
    <property type="project" value="UniProtKB"/>
</dbReference>
<dbReference type="GO" id="GO:0005654">
    <property type="term" value="C:nucleoplasm"/>
    <property type="evidence" value="ECO:0000304"/>
    <property type="project" value="Reactome"/>
</dbReference>
<dbReference type="GO" id="GO:0005634">
    <property type="term" value="C:nucleus"/>
    <property type="evidence" value="ECO:0000314"/>
    <property type="project" value="FlyBase"/>
</dbReference>
<dbReference type="GO" id="GO:0048471">
    <property type="term" value="C:perinuclear region of cytoplasm"/>
    <property type="evidence" value="ECO:0000314"/>
    <property type="project" value="FlyBase"/>
</dbReference>
<dbReference type="GO" id="GO:0004726">
    <property type="term" value="F:non-membrane spanning protein tyrosine phosphatase activity"/>
    <property type="evidence" value="ECO:0000314"/>
    <property type="project" value="FlyBase"/>
</dbReference>
<dbReference type="GO" id="GO:0019901">
    <property type="term" value="F:protein kinase binding"/>
    <property type="evidence" value="ECO:0000318"/>
    <property type="project" value="GO_Central"/>
</dbReference>
<dbReference type="GO" id="GO:0140311">
    <property type="term" value="F:protein sequestering activity"/>
    <property type="evidence" value="ECO:0000353"/>
    <property type="project" value="FlyBase"/>
</dbReference>
<dbReference type="GO" id="GO:0004725">
    <property type="term" value="F:protein tyrosine phosphatase activity"/>
    <property type="evidence" value="ECO:0000314"/>
    <property type="project" value="FlyBase"/>
</dbReference>
<dbReference type="GO" id="GO:0007411">
    <property type="term" value="P:axon guidance"/>
    <property type="evidence" value="ECO:0000353"/>
    <property type="project" value="FlyBase"/>
</dbReference>
<dbReference type="GO" id="GO:0007259">
    <property type="term" value="P:cell surface receptor signaling pathway via JAK-STAT"/>
    <property type="evidence" value="ECO:0000304"/>
    <property type="project" value="Reactome"/>
</dbReference>
<dbReference type="GO" id="GO:0071456">
    <property type="term" value="P:cellular response to hypoxia"/>
    <property type="evidence" value="ECO:0000315"/>
    <property type="project" value="FlyBase"/>
</dbReference>
<dbReference type="GO" id="GO:0071260">
    <property type="term" value="P:cellular response to mechanical stimulus"/>
    <property type="evidence" value="ECO:0000315"/>
    <property type="project" value="FlyBase"/>
</dbReference>
<dbReference type="GO" id="GO:0007377">
    <property type="term" value="P:germ-band extension"/>
    <property type="evidence" value="ECO:0000314"/>
    <property type="project" value="UniProtKB"/>
</dbReference>
<dbReference type="GO" id="GO:0000278">
    <property type="term" value="P:mitotic cell cycle"/>
    <property type="evidence" value="ECO:0000315"/>
    <property type="project" value="FlyBase"/>
</dbReference>
<dbReference type="GO" id="GO:0008285">
    <property type="term" value="P:negative regulation of cell population proliferation"/>
    <property type="evidence" value="ECO:0000315"/>
    <property type="project" value="FlyBase"/>
</dbReference>
<dbReference type="GO" id="GO:0042059">
    <property type="term" value="P:negative regulation of epidermal growth factor receptor signaling pathway"/>
    <property type="evidence" value="ECO:0000316"/>
    <property type="project" value="FlyBase"/>
</dbReference>
<dbReference type="GO" id="GO:0070373">
    <property type="term" value="P:negative regulation of ERK1 and ERK2 cascade"/>
    <property type="evidence" value="ECO:0000316"/>
    <property type="project" value="FlyBase"/>
</dbReference>
<dbReference type="GO" id="GO:0046627">
    <property type="term" value="P:negative regulation of insulin receptor signaling pathway"/>
    <property type="evidence" value="ECO:0000315"/>
    <property type="project" value="FlyBase"/>
</dbReference>
<dbReference type="GO" id="GO:0046329">
    <property type="term" value="P:negative regulation of JNK cascade"/>
    <property type="evidence" value="ECO:0000316"/>
    <property type="project" value="FlyBase"/>
</dbReference>
<dbReference type="GO" id="GO:0046621">
    <property type="term" value="P:negative regulation of organ growth"/>
    <property type="evidence" value="ECO:0000315"/>
    <property type="project" value="FlyBase"/>
</dbReference>
<dbReference type="GO" id="GO:0051898">
    <property type="term" value="P:negative regulation of phosphatidylinositol 3-kinase/protein kinase B signal transduction"/>
    <property type="evidence" value="ECO:0000316"/>
    <property type="project" value="FlyBase"/>
</dbReference>
<dbReference type="GO" id="GO:0046426">
    <property type="term" value="P:negative regulation of receptor signaling pathway via JAK-STAT"/>
    <property type="evidence" value="ECO:0000315"/>
    <property type="project" value="FlyBase"/>
</dbReference>
<dbReference type="GO" id="GO:1904262">
    <property type="term" value="P:negative regulation of TORC1 signaling"/>
    <property type="evidence" value="ECO:0000315"/>
    <property type="project" value="FlyBase"/>
</dbReference>
<dbReference type="GO" id="GO:0030948">
    <property type="term" value="P:negative regulation of vascular endothelial growth factor receptor signaling pathway"/>
    <property type="evidence" value="ECO:0000316"/>
    <property type="project" value="FlyBase"/>
</dbReference>
<dbReference type="GO" id="GO:0035332">
    <property type="term" value="P:positive regulation of hippo signaling"/>
    <property type="evidence" value="ECO:0000315"/>
    <property type="project" value="FlyBase"/>
</dbReference>
<dbReference type="GO" id="GO:0032880">
    <property type="term" value="P:regulation of protein localization"/>
    <property type="evidence" value="ECO:0000314"/>
    <property type="project" value="FlyBase"/>
</dbReference>
<dbReference type="GO" id="GO:0031647">
    <property type="term" value="P:regulation of protein stability"/>
    <property type="evidence" value="ECO:0000315"/>
    <property type="project" value="FlyBase"/>
</dbReference>
<dbReference type="CDD" id="cd14545">
    <property type="entry name" value="PTPc-N1_2"/>
    <property type="match status" value="1"/>
</dbReference>
<dbReference type="FunFam" id="3.90.190.10:FF:000136">
    <property type="entry name" value="Tyrosine-protein phosphatase non-receptor type 61F"/>
    <property type="match status" value="1"/>
</dbReference>
<dbReference type="Gene3D" id="3.90.190.10">
    <property type="entry name" value="Protein tyrosine phosphatase superfamily"/>
    <property type="match status" value="1"/>
</dbReference>
<dbReference type="InterPro" id="IPR051985">
    <property type="entry name" value="NR_tyrosine_phosphatase"/>
</dbReference>
<dbReference type="InterPro" id="IPR029021">
    <property type="entry name" value="Prot-tyrosine_phosphatase-like"/>
</dbReference>
<dbReference type="InterPro" id="IPR000242">
    <property type="entry name" value="PTP_cat"/>
</dbReference>
<dbReference type="InterPro" id="IPR016130">
    <property type="entry name" value="Tyr_Pase_AS"/>
</dbReference>
<dbReference type="InterPro" id="IPR003595">
    <property type="entry name" value="Tyr_Pase_cat"/>
</dbReference>
<dbReference type="InterPro" id="IPR000387">
    <property type="entry name" value="Tyr_Pase_dom"/>
</dbReference>
<dbReference type="PANTHER" id="PTHR46047">
    <property type="entry name" value="TYROSINE-PROTEIN PHOSPHATASE NON-RECEPTOR TYPE 61F"/>
    <property type="match status" value="1"/>
</dbReference>
<dbReference type="PANTHER" id="PTHR46047:SF3">
    <property type="entry name" value="TYROSINE-PROTEIN PHOSPHATASE NON-RECEPTOR TYPE 61F"/>
    <property type="match status" value="1"/>
</dbReference>
<dbReference type="Pfam" id="PF00102">
    <property type="entry name" value="Y_phosphatase"/>
    <property type="match status" value="1"/>
</dbReference>
<dbReference type="PRINTS" id="PR00700">
    <property type="entry name" value="PRTYPHPHTASE"/>
</dbReference>
<dbReference type="SMART" id="SM00194">
    <property type="entry name" value="PTPc"/>
    <property type="match status" value="1"/>
</dbReference>
<dbReference type="SMART" id="SM00404">
    <property type="entry name" value="PTPc_motif"/>
    <property type="match status" value="1"/>
</dbReference>
<dbReference type="SUPFAM" id="SSF52799">
    <property type="entry name" value="(Phosphotyrosine protein) phosphatases II"/>
    <property type="match status" value="1"/>
</dbReference>
<dbReference type="PROSITE" id="PS00383">
    <property type="entry name" value="TYR_PHOSPHATASE_1"/>
    <property type="match status" value="1"/>
</dbReference>
<dbReference type="PROSITE" id="PS50056">
    <property type="entry name" value="TYR_PHOSPHATASE_2"/>
    <property type="match status" value="1"/>
</dbReference>
<dbReference type="PROSITE" id="PS50055">
    <property type="entry name" value="TYR_PHOSPHATASE_PTP"/>
    <property type="match status" value="1"/>
</dbReference>